<evidence type="ECO:0000250" key="1">
    <source>
        <dbReference type="UniProtKB" id="P0ABI4"/>
    </source>
</evidence>
<evidence type="ECO:0000250" key="2">
    <source>
        <dbReference type="UniProtKB" id="Q9WZ31"/>
    </source>
</evidence>
<evidence type="ECO:0000255" key="3"/>
<evidence type="ECO:0000305" key="4"/>
<comment type="function">
    <text evidence="1 2">Mediates influx of magnesium ions (By similarity). Alternates between open and closed states. Activated by low cytoplasmic Mg(2+) levels. Inactive when cytoplasmic Mg(2+) levels are high (By similarity).</text>
</comment>
<comment type="catalytic activity">
    <reaction evidence="1">
        <text>Mg(2+)(in) = Mg(2+)(out)</text>
        <dbReference type="Rhea" id="RHEA:29827"/>
        <dbReference type="ChEBI" id="CHEBI:18420"/>
    </reaction>
</comment>
<comment type="subunit">
    <text evidence="2">Homopentamer. In the absence of Mg(2+), interactions between subunits are weakened, and dimers, trimers and tetramers can be observed in vitro (By similarity).</text>
</comment>
<comment type="subcellular location">
    <subcellularLocation>
        <location evidence="1">Cell inner membrane</location>
        <topology evidence="2">Multi-pass membrane protein</topology>
    </subcellularLocation>
</comment>
<comment type="domain">
    <text evidence="2">The central ion permeation pathway is formed by the first transmembrane domain from each of the five subunits. Mg(2+) binding strengthens interactions between subunits and leads to the formation of a symmetrical homopentamer surrounding a closed ion permeation pathway. Low Mg(2+) concentrations trigger both a conformation change within each subunit and a loosening of the interactions between subunits. This results in an open ion conduction pathway. In addition, this results in a less symmetrical shape of the whole complex.</text>
</comment>
<comment type="similarity">
    <text evidence="4">Belongs to the CorA metal ion transporter (MIT) (TC 1.A.35) family.</text>
</comment>
<reference key="1">
    <citation type="journal article" date="2006" name="Genome Res.">
        <title>Massive genome erosion and functional adaptations provide insights into the symbiotic lifestyle of Sodalis glossinidius in the tsetse host.</title>
        <authorList>
            <person name="Toh H."/>
            <person name="Weiss B.L."/>
            <person name="Perkin S.A.H."/>
            <person name="Yamashita A."/>
            <person name="Oshima K."/>
            <person name="Hattori M."/>
            <person name="Aksoy S."/>
        </authorList>
    </citation>
    <scope>NUCLEOTIDE SEQUENCE [LARGE SCALE GENOMIC DNA]</scope>
    <source>
        <strain>morsitans</strain>
    </source>
</reference>
<protein>
    <recommendedName>
        <fullName>Magnesium transport protein CorA</fullName>
    </recommendedName>
</protein>
<proteinExistence type="inferred from homology"/>
<sequence>MLNAFQLENHRLSRLDADEQGTLLDAVWVDLIEPGDDERERVQHELGQSLATRLELEDIEASARFFEDEDGLHIHSFFFYADAEDHAGNATVAFTIRDGRLYTLRERELPAFRLYRMRTRSQTLIDGNVYELLLDLFETKIEQLADEIENIYSDLEALSLVIMDGHQGDEYDNALSTLAELEDVGWKVRLCLMDTQRALNFLVRKARLPSGQLEQAREVLRDIESLLPHNESLFQKVNFLMQAAMGFINIEQNRIIKIFSVVSVVFLPPTLVASSYGMNFEFMPELRWSFGYPGAIMLMILAGLAPYLYFKRKNWL</sequence>
<feature type="chain" id="PRO_0000239106" description="Magnesium transport protein CorA">
    <location>
        <begin position="1"/>
        <end position="316"/>
    </location>
</feature>
<feature type="transmembrane region" description="Helical" evidence="3">
    <location>
        <begin position="258"/>
        <end position="278"/>
    </location>
</feature>
<feature type="transmembrane region" description="Helical" evidence="3">
    <location>
        <begin position="290"/>
        <end position="310"/>
    </location>
</feature>
<feature type="short sequence motif" description="Probable selectivity filter" evidence="2">
    <location>
        <begin position="277"/>
        <end position="279"/>
    </location>
</feature>
<feature type="site" description="Essential for ion permeation" evidence="2">
    <location>
        <position position="253"/>
    </location>
</feature>
<name>CORA_SODGM</name>
<gene>
    <name type="primary">corA</name>
    <name type="ordered locus">SG2341</name>
</gene>
<dbReference type="EMBL" id="AP008232">
    <property type="protein sequence ID" value="BAE75616.1"/>
    <property type="molecule type" value="Genomic_DNA"/>
</dbReference>
<dbReference type="RefSeq" id="WP_011412148.1">
    <property type="nucleotide sequence ID" value="NC_007712.1"/>
</dbReference>
<dbReference type="SMR" id="Q2NQF9"/>
<dbReference type="STRING" id="343509.SG2341"/>
<dbReference type="KEGG" id="sgl:SG2341"/>
<dbReference type="eggNOG" id="COG0598">
    <property type="taxonomic scope" value="Bacteria"/>
</dbReference>
<dbReference type="HOGENOM" id="CLU_007127_5_0_6"/>
<dbReference type="OrthoDB" id="9803416at2"/>
<dbReference type="BioCyc" id="SGLO343509:SGP1_RS21285-MONOMER"/>
<dbReference type="Proteomes" id="UP000001932">
    <property type="component" value="Chromosome"/>
</dbReference>
<dbReference type="GO" id="GO:0005886">
    <property type="term" value="C:plasma membrane"/>
    <property type="evidence" value="ECO:0007669"/>
    <property type="project" value="UniProtKB-SubCell"/>
</dbReference>
<dbReference type="GO" id="GO:0015087">
    <property type="term" value="F:cobalt ion transmembrane transporter activity"/>
    <property type="evidence" value="ECO:0007669"/>
    <property type="project" value="InterPro"/>
</dbReference>
<dbReference type="GO" id="GO:0015095">
    <property type="term" value="F:magnesium ion transmembrane transporter activity"/>
    <property type="evidence" value="ECO:0007669"/>
    <property type="project" value="InterPro"/>
</dbReference>
<dbReference type="GO" id="GO:0015099">
    <property type="term" value="F:nickel cation transmembrane transporter activity"/>
    <property type="evidence" value="ECO:0007669"/>
    <property type="project" value="TreeGrafter"/>
</dbReference>
<dbReference type="CDD" id="cd12835">
    <property type="entry name" value="EcCorA-like_1"/>
    <property type="match status" value="1"/>
</dbReference>
<dbReference type="FunFam" id="1.20.58.340:FF:000001">
    <property type="entry name" value="Magnesium transport protein CorA"/>
    <property type="match status" value="1"/>
</dbReference>
<dbReference type="Gene3D" id="1.20.58.340">
    <property type="entry name" value="Magnesium transport protein CorA, transmembrane region"/>
    <property type="match status" value="1"/>
</dbReference>
<dbReference type="InterPro" id="IPR045861">
    <property type="entry name" value="CorA_cytoplasmic_dom"/>
</dbReference>
<dbReference type="InterPro" id="IPR050829">
    <property type="entry name" value="CorA_MIT"/>
</dbReference>
<dbReference type="InterPro" id="IPR045863">
    <property type="entry name" value="CorA_TM1_TM2"/>
</dbReference>
<dbReference type="InterPro" id="IPR004488">
    <property type="entry name" value="Mg/Co-transport_prot_CorA"/>
</dbReference>
<dbReference type="InterPro" id="IPR002523">
    <property type="entry name" value="MgTranspt_CorA/ZnTranspt_ZntB"/>
</dbReference>
<dbReference type="NCBIfam" id="TIGR00383">
    <property type="entry name" value="corA"/>
    <property type="match status" value="1"/>
</dbReference>
<dbReference type="PANTHER" id="PTHR47685">
    <property type="entry name" value="MAGNESIUM TRANSPORT PROTEIN CORA"/>
    <property type="match status" value="1"/>
</dbReference>
<dbReference type="PANTHER" id="PTHR47685:SF1">
    <property type="entry name" value="MAGNESIUM TRANSPORT PROTEIN CORA"/>
    <property type="match status" value="1"/>
</dbReference>
<dbReference type="Pfam" id="PF01544">
    <property type="entry name" value="CorA"/>
    <property type="match status" value="1"/>
</dbReference>
<dbReference type="SUPFAM" id="SSF143865">
    <property type="entry name" value="CorA soluble domain-like"/>
    <property type="match status" value="1"/>
</dbReference>
<dbReference type="SUPFAM" id="SSF144083">
    <property type="entry name" value="Magnesium transport protein CorA, transmembrane region"/>
    <property type="match status" value="1"/>
</dbReference>
<organism>
    <name type="scientific">Sodalis glossinidius (strain morsitans)</name>
    <dbReference type="NCBI Taxonomy" id="343509"/>
    <lineage>
        <taxon>Bacteria</taxon>
        <taxon>Pseudomonadati</taxon>
        <taxon>Pseudomonadota</taxon>
        <taxon>Gammaproteobacteria</taxon>
        <taxon>Enterobacterales</taxon>
        <taxon>Bruguierivoracaceae</taxon>
        <taxon>Sodalis</taxon>
    </lineage>
</organism>
<keyword id="KW-0997">Cell inner membrane</keyword>
<keyword id="KW-1003">Cell membrane</keyword>
<keyword id="KW-0406">Ion transport</keyword>
<keyword id="KW-0460">Magnesium</keyword>
<keyword id="KW-0472">Membrane</keyword>
<keyword id="KW-0812">Transmembrane</keyword>
<keyword id="KW-1133">Transmembrane helix</keyword>
<keyword id="KW-0813">Transport</keyword>
<accession>Q2NQF9</accession>